<evidence type="ECO:0000250" key="1">
    <source>
        <dbReference type="UniProtKB" id="E9PV24"/>
    </source>
</evidence>
<evidence type="ECO:0000250" key="2">
    <source>
        <dbReference type="UniProtKB" id="P02671"/>
    </source>
</evidence>
<protein>
    <recommendedName>
        <fullName>Fibrinogen alpha chain</fullName>
    </recommendedName>
    <component>
        <recommendedName>
            <fullName>Fibrinopeptide A</fullName>
        </recommendedName>
    </component>
</protein>
<proteinExistence type="evidence at protein level"/>
<dbReference type="Proteomes" id="UP000694387">
    <property type="component" value="Unplaced"/>
</dbReference>
<dbReference type="GO" id="GO:0005576">
    <property type="term" value="C:extracellular region"/>
    <property type="evidence" value="ECO:0007669"/>
    <property type="project" value="UniProtKB-SubCell"/>
</dbReference>
<dbReference type="GO" id="GO:0002250">
    <property type="term" value="P:adaptive immune response"/>
    <property type="evidence" value="ECO:0007669"/>
    <property type="project" value="UniProtKB-KW"/>
</dbReference>
<dbReference type="GO" id="GO:0007596">
    <property type="term" value="P:blood coagulation"/>
    <property type="evidence" value="ECO:0007669"/>
    <property type="project" value="UniProtKB-KW"/>
</dbReference>
<dbReference type="GO" id="GO:0045087">
    <property type="term" value="P:innate immune response"/>
    <property type="evidence" value="ECO:0007669"/>
    <property type="project" value="UniProtKB-KW"/>
</dbReference>
<sequence length="16" mass="1696">TKTEEGEFISEGGGVR</sequence>
<organism>
    <name type="scientific">Equus asinus</name>
    <name type="common">Donkey</name>
    <name type="synonym">Equus africanus asinus</name>
    <dbReference type="NCBI Taxonomy" id="9793"/>
    <lineage>
        <taxon>Eukaryota</taxon>
        <taxon>Metazoa</taxon>
        <taxon>Chordata</taxon>
        <taxon>Craniata</taxon>
        <taxon>Vertebrata</taxon>
        <taxon>Euteleostomi</taxon>
        <taxon>Mammalia</taxon>
        <taxon>Eutheria</taxon>
        <taxon>Laurasiatheria</taxon>
        <taxon>Perissodactyla</taxon>
        <taxon>Equidae</taxon>
        <taxon>Equus</taxon>
    </lineage>
</organism>
<keyword id="KW-1064">Adaptive immunity</keyword>
<keyword id="KW-0094">Blood coagulation</keyword>
<keyword id="KW-0175">Coiled coil</keyword>
<keyword id="KW-0903">Direct protein sequencing</keyword>
<keyword id="KW-1015">Disulfide bond</keyword>
<keyword id="KW-0356">Hemostasis</keyword>
<keyword id="KW-0391">Immunity</keyword>
<keyword id="KW-0399">Innate immunity</keyword>
<keyword id="KW-1185">Reference proteome</keyword>
<keyword id="KW-0964">Secreted</keyword>
<comment type="function">
    <text evidence="1">Cleaved by the protease thrombin to yield monomers which, together with fibrinogen beta (FGB) and fibrinogen gamma (FGG), polymerize to form an insoluble fibrin matrix. Fibrin has a major function in hemostasis as one of the primary components of blood clots. In addition, functions during the early stages of wound repair to stabilize the lesion and guide cell migration during re-epithelialization. Was originally thought to be essential for platelet aggregation, based on in vitro studies using anticoagulated blood. However, subsequent studies have shown that it is not absolutely required for thrombus formation in vivo. Enhances expression of SELP in activated platelets via an ITGB3-dependent pathway. Maternal fibrinogen is essential for successful pregnancy. Fibrin deposition is also associated with infection, where it protects against IFNG-mediated hemorrhage. May also facilitate the immune response via both innate and T-cell mediated pathways.</text>
</comment>
<comment type="subunit">
    <text evidence="2">Heterohexamer; disulfide linked. Contains 2 sets of 3 non-identical chains (alpha, beta and gamma). The 2 heterotrimers are in head to head conformation with the N-termini in a small central domain (By similarity).</text>
</comment>
<comment type="subcellular location">
    <subcellularLocation>
        <location>Secreted</location>
    </subcellularLocation>
</comment>
<comment type="domain">
    <text evidence="2">A long coiled coil structure formed by 3 polypeptide chains connects the central nodule to the C-terminal domains (distal nodules). The long C-terminal ends of the alpha chains fold back, contributing a fourth strand to the coiled coil structure.</text>
</comment>
<comment type="PTM">
    <text>Conversion of fibrinogen to fibrin is triggered by thrombin, which cleaves fibrinopeptides A and B from alpha and beta chains, and thus exposes the N-terminal polymerization sites responsible for the formation of the soft clot. The soft clot is converted into the hard clot by factor XIIIA which catalyzes the epsilon-(gamma-glutamyl)lysine cross-linking between gamma chains (stronger) and between alpha chains (weaker) of different monomers.</text>
</comment>
<comment type="PTM">
    <text>Forms F13A-mediated cross-links between a glutamine and the epsilon-amino group of a lysine residue, forming fibronectin-fibrinogen heteropolymers.</text>
</comment>
<name>FIBA_EQUAS</name>
<gene>
    <name type="primary">FGA</name>
</gene>
<accession>P14449</accession>
<feature type="peptide" id="PRO_0000009017" description="Fibrinopeptide A">
    <location>
        <begin position="1"/>
        <end position="16"/>
    </location>
</feature>
<feature type="non-terminal residue">
    <location>
        <position position="16"/>
    </location>
</feature>
<reference key="1">
    <citation type="journal article" date="1965" name="Acta Chem. Scand.">
        <title>Studies on fibrinopeptides from mammals.</title>
        <authorList>
            <person name="Blombaeck B."/>
            <person name="Blombaeck M."/>
            <person name="Grondahl N.J."/>
        </authorList>
    </citation>
    <scope>PROTEIN SEQUENCE</scope>
</reference>